<comment type="miscellaneous">
    <text>Was identified as a high-confidence drug target.</text>
</comment>
<comment type="similarity">
    <text evidence="2">Belongs to the mycobacterial PPE family.</text>
</comment>
<feature type="chain" id="PRO_0000378474" description="Uncharacterized PPE family protein PPE3">
    <location>
        <begin position="1"/>
        <end position="536"/>
    </location>
</feature>
<feature type="region of interest" description="Disordered" evidence="1">
    <location>
        <begin position="501"/>
        <end position="536"/>
    </location>
</feature>
<feature type="compositionally biased region" description="Basic and acidic residues" evidence="1">
    <location>
        <begin position="521"/>
        <end position="536"/>
    </location>
</feature>
<keyword id="KW-1185">Reference proteome</keyword>
<protein>
    <recommendedName>
        <fullName>Uncharacterized PPE family protein PPE3</fullName>
    </recommendedName>
</protein>
<evidence type="ECO:0000256" key="1">
    <source>
        <dbReference type="SAM" id="MobiDB-lite"/>
    </source>
</evidence>
<evidence type="ECO:0000305" key="2"/>
<dbReference type="EMBL" id="AL123456">
    <property type="protein sequence ID" value="CCP43010.1"/>
    <property type="molecule type" value="Genomic_DNA"/>
</dbReference>
<dbReference type="PIR" id="F70835">
    <property type="entry name" value="F70835"/>
</dbReference>
<dbReference type="RefSeq" id="WP_010886073.1">
    <property type="nucleotide sequence ID" value="NZ_NVQJ01000026.1"/>
</dbReference>
<dbReference type="RefSeq" id="YP_177709.1">
    <property type="nucleotide sequence ID" value="NC_000962.3"/>
</dbReference>
<dbReference type="SMR" id="P9WI45"/>
<dbReference type="STRING" id="83332.Rv0280"/>
<dbReference type="PaxDb" id="83332-Rv0280"/>
<dbReference type="GeneID" id="886619"/>
<dbReference type="KEGG" id="mtu:Rv0280"/>
<dbReference type="KEGG" id="mtv:RVBD_0280"/>
<dbReference type="TubercuList" id="Rv0280"/>
<dbReference type="eggNOG" id="COG5651">
    <property type="taxonomic scope" value="Bacteria"/>
</dbReference>
<dbReference type="InParanoid" id="P9WI45"/>
<dbReference type="OrthoDB" id="4753487at2"/>
<dbReference type="PhylomeDB" id="P9WI45"/>
<dbReference type="Proteomes" id="UP000001584">
    <property type="component" value="Chromosome"/>
</dbReference>
<dbReference type="GO" id="GO:0052572">
    <property type="term" value="P:response to host immune response"/>
    <property type="evidence" value="ECO:0000318"/>
    <property type="project" value="GO_Central"/>
</dbReference>
<dbReference type="FunFam" id="1.20.1260.20:FF:000001">
    <property type="entry name" value="PPE family protein PPE41"/>
    <property type="match status" value="1"/>
</dbReference>
<dbReference type="Gene3D" id="1.20.1260.20">
    <property type="entry name" value="PPE superfamily"/>
    <property type="match status" value="1"/>
</dbReference>
<dbReference type="InterPro" id="IPR043641">
    <property type="entry name" value="PPE-PPW_C"/>
</dbReference>
<dbReference type="InterPro" id="IPR000030">
    <property type="entry name" value="PPE_dom"/>
</dbReference>
<dbReference type="InterPro" id="IPR038332">
    <property type="entry name" value="PPE_sf"/>
</dbReference>
<dbReference type="PANTHER" id="PTHR46766">
    <property type="entry name" value="GLUTAMINE-RICH PROTEIN 2"/>
    <property type="match status" value="1"/>
</dbReference>
<dbReference type="PANTHER" id="PTHR46766:SF1">
    <property type="entry name" value="GLUTAMINE-RICH PROTEIN 2"/>
    <property type="match status" value="1"/>
</dbReference>
<dbReference type="Pfam" id="PF00823">
    <property type="entry name" value="PPE"/>
    <property type="match status" value="1"/>
</dbReference>
<dbReference type="Pfam" id="PF18878">
    <property type="entry name" value="PPE-PPW"/>
    <property type="match status" value="1"/>
</dbReference>
<dbReference type="SUPFAM" id="SSF140459">
    <property type="entry name" value="PE/PPE dimer-like"/>
    <property type="match status" value="1"/>
</dbReference>
<sequence>MTLWMASPPEVHSALLSSGPGPGSVLSAAGVWSSLSAEYAAVADELIGLLGAVQTGAWQGPSAAAYVAAHAPYLAWLMRASETSAEAAARHETVAAAYTTAVAAMPTLVELAANHTLHGVLVATNFFGINTIPIALNEADYARMWTQAASTMATYQAVAEAAVASAPQTTPAPPILAAEAADDDHDHDHDHGGEPTPLDYLVAEILRIISGGRLIWDPAEGTMNGIPFEDYTDAAQPIWWVVRAIEFSKDFETFVQELFVNPVEAFQFYFELLLFDYPTHIVQIVEALSQSPQLLAVALGSVISNLGAVTGFAGLSGLAGMQPAAIPALAPVAAAPSTLPAVAMAPTMAAPGAAVASAAAPASAPAASTVASATPAPPPAPGAAGFGYPYAIAPPGIGFGSGMSASASAQRKAPQPDSAAAAAAAAAVRDQARARRRRRVTRRGYGDEFMDMNIDVDPDWGPPPGEDPVTSTVASDRGAGHLGFAGTARREAVADAAGMTTLAGDDFGDGPTTPMVPGSWDPDRDAPGSAEPGDRG</sequence>
<reference key="1">
    <citation type="journal article" date="1998" name="Nature">
        <title>Deciphering the biology of Mycobacterium tuberculosis from the complete genome sequence.</title>
        <authorList>
            <person name="Cole S.T."/>
            <person name="Brosch R."/>
            <person name="Parkhill J."/>
            <person name="Garnier T."/>
            <person name="Churcher C.M."/>
            <person name="Harris D.E."/>
            <person name="Gordon S.V."/>
            <person name="Eiglmeier K."/>
            <person name="Gas S."/>
            <person name="Barry C.E. III"/>
            <person name="Tekaia F."/>
            <person name="Badcock K."/>
            <person name="Basham D."/>
            <person name="Brown D."/>
            <person name="Chillingworth T."/>
            <person name="Connor R."/>
            <person name="Davies R.M."/>
            <person name="Devlin K."/>
            <person name="Feltwell T."/>
            <person name="Gentles S."/>
            <person name="Hamlin N."/>
            <person name="Holroyd S."/>
            <person name="Hornsby T."/>
            <person name="Jagels K."/>
            <person name="Krogh A."/>
            <person name="McLean J."/>
            <person name="Moule S."/>
            <person name="Murphy L.D."/>
            <person name="Oliver S."/>
            <person name="Osborne J."/>
            <person name="Quail M.A."/>
            <person name="Rajandream M.A."/>
            <person name="Rogers J."/>
            <person name="Rutter S."/>
            <person name="Seeger K."/>
            <person name="Skelton S."/>
            <person name="Squares S."/>
            <person name="Squares R."/>
            <person name="Sulston J.E."/>
            <person name="Taylor K."/>
            <person name="Whitehead S."/>
            <person name="Barrell B.G."/>
        </authorList>
    </citation>
    <scope>NUCLEOTIDE SEQUENCE [LARGE SCALE GENOMIC DNA]</scope>
    <source>
        <strain>ATCC 25618 / H37Rv</strain>
    </source>
</reference>
<reference key="2">
    <citation type="journal article" date="2008" name="BMC Syst. Biol.">
        <title>targetTB: a target identification pipeline for Mycobacterium tuberculosis through an interactome, reactome and genome-scale structural analysis.</title>
        <authorList>
            <person name="Raman K."/>
            <person name="Yeturu K."/>
            <person name="Chandra N."/>
        </authorList>
    </citation>
    <scope>IDENTIFICATION AS A DRUG TARGET [LARGE SCALE ANALYSIS]</scope>
</reference>
<reference key="3">
    <citation type="journal article" date="2011" name="Mol. Cell. Proteomics">
        <title>Proteogenomic analysis of Mycobacterium tuberculosis by high resolution mass spectrometry.</title>
        <authorList>
            <person name="Kelkar D.S."/>
            <person name="Kumar D."/>
            <person name="Kumar P."/>
            <person name="Balakrishnan L."/>
            <person name="Muthusamy B."/>
            <person name="Yadav A.K."/>
            <person name="Shrivastava P."/>
            <person name="Marimuthu A."/>
            <person name="Anand S."/>
            <person name="Sundaram H."/>
            <person name="Kingsbury R."/>
            <person name="Harsha H.C."/>
            <person name="Nair B."/>
            <person name="Prasad T.S."/>
            <person name="Chauhan D.S."/>
            <person name="Katoch K."/>
            <person name="Katoch V.M."/>
            <person name="Kumar P."/>
            <person name="Chaerkady R."/>
            <person name="Ramachandran S."/>
            <person name="Dash D."/>
            <person name="Pandey A."/>
        </authorList>
    </citation>
    <scope>IDENTIFICATION BY MASS SPECTROMETRY [LARGE SCALE ANALYSIS]</scope>
    <source>
        <strain>ATCC 25618 / H37Rv</strain>
    </source>
</reference>
<gene>
    <name type="primary">PPE3</name>
    <name type="ordered locus">Rv0280</name>
</gene>
<name>PPE03_MYCTU</name>
<organism>
    <name type="scientific">Mycobacterium tuberculosis (strain ATCC 25618 / H37Rv)</name>
    <dbReference type="NCBI Taxonomy" id="83332"/>
    <lineage>
        <taxon>Bacteria</taxon>
        <taxon>Bacillati</taxon>
        <taxon>Actinomycetota</taxon>
        <taxon>Actinomycetes</taxon>
        <taxon>Mycobacteriales</taxon>
        <taxon>Mycobacteriaceae</taxon>
        <taxon>Mycobacterium</taxon>
        <taxon>Mycobacterium tuberculosis complex</taxon>
    </lineage>
</organism>
<proteinExistence type="evidence at protein level"/>
<accession>P9WI45</accession>
<accession>L0T315</accession>
<accession>Q79FY8</accession>
<accession>Q8VKN6</accession>